<sequence>MAGPFSRLLSARPGLRLLALAGAGSLAAGFLLRPEPIRAASERRRQYPPSAEYPDLRKHNNCMASHLTPAVYARLCDKTTPTGWTLDQCIQTGVDNPGHPFIKTVGMVAGDEETYEVFAELFDPVIQERHNGYDPRTMKHTTDLDASKIRSGFFDERYVLSSRVRTGRSIRGLSLPPACTRAERREVERVVVDALSGLKGDLAGRYYRLSEMTEAEQQQLIDDHFLFDKPVSPLLTAAGMARDWPDARGIWHNNEKSFLIWVNEEDHTRVISMEKGGNMKKVFERFCRGLKEVERLIQERGWEFMWNERLGYILTCPSNLGTGLRAGVHIKLPLLSKDSRFPKILENLRLQKRGTGGVDTAATGSIFDISNLDRLGKSEVELVQLVIDGVNYLIDCERRLERGQDIRIPPPLPNKH</sequence>
<organism>
    <name type="scientific">Sus scrofa</name>
    <name type="common">Pig</name>
    <dbReference type="NCBI Taxonomy" id="9823"/>
    <lineage>
        <taxon>Eukaryota</taxon>
        <taxon>Metazoa</taxon>
        <taxon>Chordata</taxon>
        <taxon>Craniata</taxon>
        <taxon>Vertebrata</taxon>
        <taxon>Euteleostomi</taxon>
        <taxon>Mammalia</taxon>
        <taxon>Eutheria</taxon>
        <taxon>Laurasiatheria</taxon>
        <taxon>Artiodactyla</taxon>
        <taxon>Suina</taxon>
        <taxon>Suidae</taxon>
        <taxon>Sus</taxon>
    </lineage>
</organism>
<protein>
    <recommendedName>
        <fullName>Creatine kinase U-type, mitochondrial</fullName>
        <ecNumber>2.7.3.2</ecNumber>
    </recommendedName>
    <alternativeName>
        <fullName>Acidic-type mitochondrial creatine kinase</fullName>
        <shortName>Mia-CK</shortName>
    </alternativeName>
    <alternativeName>
        <fullName>Ubiquitous mitochondrial creatine kinase</fullName>
        <shortName>U-MtCK</shortName>
    </alternativeName>
</protein>
<name>KCRU_PIG</name>
<evidence type="ECO:0000250" key="1"/>
<evidence type="ECO:0000250" key="2">
    <source>
        <dbReference type="UniProtKB" id="P00564"/>
    </source>
</evidence>
<evidence type="ECO:0000250" key="3">
    <source>
        <dbReference type="UniProtKB" id="P07310"/>
    </source>
</evidence>
<evidence type="ECO:0000250" key="4">
    <source>
        <dbReference type="UniProtKB" id="P25809"/>
    </source>
</evidence>
<evidence type="ECO:0000250" key="5">
    <source>
        <dbReference type="UniProtKB" id="P30275"/>
    </source>
</evidence>
<evidence type="ECO:0000255" key="6">
    <source>
        <dbReference type="PROSITE-ProRule" id="PRU00842"/>
    </source>
</evidence>
<evidence type="ECO:0000255" key="7">
    <source>
        <dbReference type="PROSITE-ProRule" id="PRU00843"/>
    </source>
</evidence>
<evidence type="ECO:0000255" key="8">
    <source>
        <dbReference type="PROSITE-ProRule" id="PRU10029"/>
    </source>
</evidence>
<evidence type="ECO:0000305" key="9"/>
<proteinExistence type="evidence at transcript level"/>
<comment type="function">
    <text evidence="1">Reversibly catalyzes the transfer of phosphate between ATP and various phosphogens (e.g. creatine phosphate). Creatine kinase isoenzymes play a central role in energy transduction in tissues with large, fluctuating energy demands, such as skeletal muscle, heart, brain and spermatozoa (By similarity).</text>
</comment>
<comment type="catalytic activity">
    <reaction evidence="8">
        <text>creatine + ATP = N-phosphocreatine + ADP + H(+)</text>
        <dbReference type="Rhea" id="RHEA:17157"/>
        <dbReference type="ChEBI" id="CHEBI:15378"/>
        <dbReference type="ChEBI" id="CHEBI:30616"/>
        <dbReference type="ChEBI" id="CHEBI:57947"/>
        <dbReference type="ChEBI" id="CHEBI:58092"/>
        <dbReference type="ChEBI" id="CHEBI:456216"/>
        <dbReference type="EC" id="2.7.3.2"/>
    </reaction>
</comment>
<comment type="subunit">
    <text evidence="1">Exists as an octamer composed of four MTCK homodimers.</text>
</comment>
<comment type="subcellular location">
    <subcellularLocation>
        <location evidence="1">Mitochondrion inner membrane</location>
        <topology evidence="1">Peripheral membrane protein</topology>
        <orientation evidence="1">Intermembrane side</orientation>
    </subcellularLocation>
</comment>
<comment type="miscellaneous">
    <text evidence="1">Mitochondrial creatine kinase binds cardiolipin.</text>
</comment>
<comment type="similarity">
    <text evidence="6 7">Belongs to the ATP:guanido phosphotransferase family.</text>
</comment>
<dbReference type="EC" id="2.7.3.2"/>
<dbReference type="EMBL" id="EU650786">
    <property type="protein sequence ID" value="ACD02423.1"/>
    <property type="molecule type" value="mRNA"/>
</dbReference>
<dbReference type="EMBL" id="F14801">
    <property type="protein sequence ID" value="CAA23265.1"/>
    <property type="molecule type" value="mRNA"/>
</dbReference>
<dbReference type="RefSeq" id="NP_001302567.1">
    <property type="nucleotide sequence ID" value="NM_001315638.1"/>
</dbReference>
<dbReference type="SMR" id="Q29577"/>
<dbReference type="FunCoup" id="Q29577">
    <property type="interactions" value="277"/>
</dbReference>
<dbReference type="STRING" id="9823.ENSSSCP00000005068"/>
<dbReference type="PaxDb" id="9823-ENSSSCP00000005068"/>
<dbReference type="PeptideAtlas" id="Q29577"/>
<dbReference type="GeneID" id="100519994"/>
<dbReference type="KEGG" id="ssc:100519994"/>
<dbReference type="CTD" id="548596"/>
<dbReference type="eggNOG" id="KOG3581">
    <property type="taxonomic scope" value="Eukaryota"/>
</dbReference>
<dbReference type="InParanoid" id="Q29577"/>
<dbReference type="OrthoDB" id="430219at2759"/>
<dbReference type="Proteomes" id="UP000008227">
    <property type="component" value="Unplaced"/>
</dbReference>
<dbReference type="Proteomes" id="UP000314985">
    <property type="component" value="Unplaced"/>
</dbReference>
<dbReference type="Proteomes" id="UP000694570">
    <property type="component" value="Unplaced"/>
</dbReference>
<dbReference type="Proteomes" id="UP000694571">
    <property type="component" value="Unplaced"/>
</dbReference>
<dbReference type="Proteomes" id="UP000694720">
    <property type="component" value="Unplaced"/>
</dbReference>
<dbReference type="Proteomes" id="UP000694722">
    <property type="component" value="Unplaced"/>
</dbReference>
<dbReference type="Proteomes" id="UP000694723">
    <property type="component" value="Unplaced"/>
</dbReference>
<dbReference type="Proteomes" id="UP000694724">
    <property type="component" value="Unplaced"/>
</dbReference>
<dbReference type="Proteomes" id="UP000694725">
    <property type="component" value="Unplaced"/>
</dbReference>
<dbReference type="Proteomes" id="UP000694726">
    <property type="component" value="Unplaced"/>
</dbReference>
<dbReference type="Proteomes" id="UP000694727">
    <property type="component" value="Unplaced"/>
</dbReference>
<dbReference type="Proteomes" id="UP000694728">
    <property type="component" value="Unplaced"/>
</dbReference>
<dbReference type="GO" id="GO:0005743">
    <property type="term" value="C:mitochondrial inner membrane"/>
    <property type="evidence" value="ECO:0007669"/>
    <property type="project" value="UniProtKB-SubCell"/>
</dbReference>
<dbReference type="GO" id="GO:0005739">
    <property type="term" value="C:mitochondrion"/>
    <property type="evidence" value="ECO:0000318"/>
    <property type="project" value="GO_Central"/>
</dbReference>
<dbReference type="GO" id="GO:0005524">
    <property type="term" value="F:ATP binding"/>
    <property type="evidence" value="ECO:0007669"/>
    <property type="project" value="UniProtKB-KW"/>
</dbReference>
<dbReference type="GO" id="GO:0004111">
    <property type="term" value="F:creatine kinase activity"/>
    <property type="evidence" value="ECO:0000318"/>
    <property type="project" value="GO_Central"/>
</dbReference>
<dbReference type="GO" id="GO:0046314">
    <property type="term" value="P:phosphocreatine biosynthetic process"/>
    <property type="evidence" value="ECO:0000318"/>
    <property type="project" value="GO_Central"/>
</dbReference>
<dbReference type="CDD" id="cd00716">
    <property type="entry name" value="creatine_kinase_like"/>
    <property type="match status" value="1"/>
</dbReference>
<dbReference type="FunFam" id="3.30.590.10:FF:000002">
    <property type="entry name" value="Creatine kinase S-type, mitochondrial"/>
    <property type="match status" value="1"/>
</dbReference>
<dbReference type="FunFam" id="1.10.135.10:FF:000002">
    <property type="entry name" value="creatine kinase S-type, mitochondrial"/>
    <property type="match status" value="1"/>
</dbReference>
<dbReference type="Gene3D" id="1.10.135.10">
    <property type="entry name" value="ATP:guanido phosphotransferase, N-terminal domain"/>
    <property type="match status" value="1"/>
</dbReference>
<dbReference type="Gene3D" id="3.30.590.10">
    <property type="entry name" value="Glutamine synthetase/guanido kinase, catalytic domain"/>
    <property type="match status" value="1"/>
</dbReference>
<dbReference type="InterPro" id="IPR000749">
    <property type="entry name" value="ATP-guanido_PTrfase"/>
</dbReference>
<dbReference type="InterPro" id="IPR022415">
    <property type="entry name" value="ATP-guanido_PTrfase_AS"/>
</dbReference>
<dbReference type="InterPro" id="IPR022414">
    <property type="entry name" value="ATP-guanido_PTrfase_cat"/>
</dbReference>
<dbReference type="InterPro" id="IPR022413">
    <property type="entry name" value="ATP-guanido_PTrfase_N"/>
</dbReference>
<dbReference type="InterPro" id="IPR036802">
    <property type="entry name" value="ATP-guanido_PTrfase_N_sf"/>
</dbReference>
<dbReference type="InterPro" id="IPR014746">
    <property type="entry name" value="Gln_synth/guanido_kin_cat_dom"/>
</dbReference>
<dbReference type="PANTHER" id="PTHR11547">
    <property type="entry name" value="ARGININE OR CREATINE KINASE"/>
    <property type="match status" value="1"/>
</dbReference>
<dbReference type="PANTHER" id="PTHR11547:SF24">
    <property type="entry name" value="CREATINE KINASE U-TYPE, MITOCHONDRIAL"/>
    <property type="match status" value="1"/>
</dbReference>
<dbReference type="Pfam" id="PF00217">
    <property type="entry name" value="ATP-gua_Ptrans"/>
    <property type="match status" value="1"/>
</dbReference>
<dbReference type="Pfam" id="PF02807">
    <property type="entry name" value="ATP-gua_PtransN"/>
    <property type="match status" value="1"/>
</dbReference>
<dbReference type="SUPFAM" id="SSF55931">
    <property type="entry name" value="Glutamine synthetase/guanido kinase"/>
    <property type="match status" value="1"/>
</dbReference>
<dbReference type="SUPFAM" id="SSF48034">
    <property type="entry name" value="Guanido kinase N-terminal domain"/>
    <property type="match status" value="1"/>
</dbReference>
<dbReference type="PROSITE" id="PS00112">
    <property type="entry name" value="PHOSPHAGEN_KINASE"/>
    <property type="match status" value="1"/>
</dbReference>
<dbReference type="PROSITE" id="PS51510">
    <property type="entry name" value="PHOSPHAGEN_KINASE_C"/>
    <property type="match status" value="1"/>
</dbReference>
<dbReference type="PROSITE" id="PS51509">
    <property type="entry name" value="PHOSPHAGEN_KINASE_N"/>
    <property type="match status" value="1"/>
</dbReference>
<accession>Q29577</accession>
<accession>B2ZF48</accession>
<keyword id="KW-0067">ATP-binding</keyword>
<keyword id="KW-0418">Kinase</keyword>
<keyword id="KW-0472">Membrane</keyword>
<keyword id="KW-0496">Mitochondrion</keyword>
<keyword id="KW-0999">Mitochondrion inner membrane</keyword>
<keyword id="KW-0547">Nucleotide-binding</keyword>
<keyword id="KW-0597">Phosphoprotein</keyword>
<keyword id="KW-1185">Reference proteome</keyword>
<keyword id="KW-0808">Transferase</keyword>
<keyword id="KW-0809">Transit peptide</keyword>
<gene>
    <name type="primary">CKMT1</name>
</gene>
<reference key="1">
    <citation type="submission" date="2008-04" db="EMBL/GenBank/DDBJ databases">
        <authorList>
            <person name="Liu G.Y."/>
        </authorList>
    </citation>
    <scope>NUCLEOTIDE SEQUENCE [LARGE SCALE MRNA]</scope>
</reference>
<reference key="2">
    <citation type="journal article" date="1996" name="Mamm. Genome">
        <title>Evaluation and characterization of a porcine small intestine cDNA library: analysis of 839 clones.</title>
        <authorList>
            <person name="Winteroe A.K."/>
            <person name="Fredholm M."/>
            <person name="Davies W."/>
        </authorList>
    </citation>
    <scope>NUCLEOTIDE SEQUENCE [LARGE SCALE MRNA] OF 333-409</scope>
    <source>
        <tissue>Small intestine</tissue>
    </source>
</reference>
<feature type="transit peptide" description="Mitochondrion" evidence="1">
    <location>
        <begin position="1"/>
        <end position="39"/>
    </location>
</feature>
<feature type="chain" id="PRO_0000211983" description="Creatine kinase U-type, mitochondrial">
    <location>
        <begin position="40"/>
        <end position="416"/>
    </location>
</feature>
<feature type="domain" description="Phosphagen kinase N-terminal" evidence="6">
    <location>
        <begin position="44"/>
        <end position="131"/>
    </location>
</feature>
<feature type="domain" description="Phosphagen kinase C-terminal" evidence="7">
    <location>
        <begin position="158"/>
        <end position="400"/>
    </location>
</feature>
<feature type="region of interest" description="Cardiolipin-binding" evidence="1">
    <location>
        <begin position="40"/>
        <end position="63"/>
    </location>
</feature>
<feature type="binding site" evidence="7">
    <location>
        <begin position="161"/>
        <end position="165"/>
    </location>
    <ligand>
        <name>ATP</name>
        <dbReference type="ChEBI" id="CHEBI:30616"/>
    </ligand>
</feature>
<feature type="binding site" evidence="7">
    <location>
        <position position="224"/>
    </location>
    <ligand>
        <name>ATP</name>
        <dbReference type="ChEBI" id="CHEBI:30616"/>
    </ligand>
</feature>
<feature type="binding site" evidence="7">
    <location>
        <position position="269"/>
    </location>
    <ligand>
        <name>ATP</name>
        <dbReference type="ChEBI" id="CHEBI:30616"/>
    </ligand>
</feature>
<feature type="binding site" evidence="7">
    <location>
        <position position="325"/>
    </location>
    <ligand>
        <name>ATP</name>
        <dbReference type="ChEBI" id="CHEBI:30616"/>
    </ligand>
</feature>
<feature type="binding site" evidence="7">
    <location>
        <begin position="353"/>
        <end position="358"/>
    </location>
    <ligand>
        <name>ATP</name>
        <dbReference type="ChEBI" id="CHEBI:30616"/>
    </ligand>
</feature>
<feature type="binding site" evidence="7">
    <location>
        <position position="368"/>
    </location>
    <ligand>
        <name>ATP</name>
        <dbReference type="ChEBI" id="CHEBI:30616"/>
    </ligand>
</feature>
<feature type="modified residue" description="Phosphoserine" evidence="4">
    <location>
        <position position="151"/>
    </location>
</feature>
<feature type="modified residue" description="Phosphoserine" evidence="4">
    <location>
        <position position="196"/>
    </location>
</feature>
<feature type="modified residue" description="Phosphothreonine" evidence="2">
    <location>
        <position position="213"/>
    </location>
</feature>
<feature type="modified residue" description="Phosphoserine" evidence="5">
    <location>
        <position position="232"/>
    </location>
</feature>
<feature type="modified residue" description="Phosphothreonine" evidence="3">
    <location>
        <position position="355"/>
    </location>
</feature>
<feature type="modified residue" description="Phosphoserine" evidence="5">
    <location>
        <position position="365"/>
    </location>
</feature>
<feature type="sequence conflict" description="In Ref. 2; CAA23265." evidence="9" ref="2">
    <original>SI</original>
    <variation>ES</variation>
    <location>
        <begin position="365"/>
        <end position="366"/>
    </location>
</feature>
<feature type="sequence conflict" description="In Ref. 2; CAA23265." evidence="9" ref="2">
    <original>CER</original>
    <variation>LANG</variation>
    <location>
        <begin position="396"/>
        <end position="398"/>
    </location>
</feature>